<organism>
    <name type="scientific">Dictyostelium discoideum</name>
    <name type="common">Social amoeba</name>
    <dbReference type="NCBI Taxonomy" id="44689"/>
    <lineage>
        <taxon>Eukaryota</taxon>
        <taxon>Amoebozoa</taxon>
        <taxon>Evosea</taxon>
        <taxon>Eumycetozoa</taxon>
        <taxon>Dictyostelia</taxon>
        <taxon>Dictyosteliales</taxon>
        <taxon>Dictyosteliaceae</taxon>
        <taxon>Dictyostelium</taxon>
    </lineage>
</organism>
<feature type="chain" id="PRO_0000328442" description="ER membrane protein complex subunit 8/9 homolog">
    <location>
        <begin position="1"/>
        <end position="192"/>
    </location>
</feature>
<feature type="domain" description="MPN" evidence="1">
    <location>
        <begin position="5"/>
        <end position="135"/>
    </location>
</feature>
<sequence length="192" mass="21975">MNNNISITTEALSKAHLHSFKHHASSVNGILLGKADKNSILITDIIPLFHTQTLLPMFEVAMIQIEKYCRDNNIDMVGYYHSNQCIANELEPEPIAKKIADRLNNELNNMCFLMISKIEVNRPSGLVSIDKVGSDWLKNRKTLITIDTTSNSEDINEILKRNLQNIKESQIYDFEEYLSNPTRDWLNKSLVL</sequence>
<keyword id="KW-1185">Reference proteome</keyword>
<evidence type="ECO:0000255" key="1">
    <source>
        <dbReference type="PROSITE-ProRule" id="PRU01182"/>
    </source>
</evidence>
<evidence type="ECO:0000305" key="2"/>
<dbReference type="EMBL" id="AAFI02000003">
    <property type="protein sequence ID" value="EAL73477.1"/>
    <property type="molecule type" value="Genomic_DNA"/>
</dbReference>
<dbReference type="RefSeq" id="XP_647513.1">
    <property type="nucleotide sequence ID" value="XM_642421.1"/>
</dbReference>
<dbReference type="SMR" id="Q55FM0"/>
<dbReference type="FunCoup" id="Q55FM0">
    <property type="interactions" value="227"/>
</dbReference>
<dbReference type="STRING" id="44689.Q55FM0"/>
<dbReference type="PaxDb" id="44689-DDB0305012"/>
<dbReference type="EnsemblProtists" id="EAL73477">
    <property type="protein sequence ID" value="EAL73477"/>
    <property type="gene ID" value="DDB_G0268048"/>
</dbReference>
<dbReference type="GeneID" id="8616320"/>
<dbReference type="KEGG" id="ddi:DDB_G0268048"/>
<dbReference type="dictyBase" id="DDB_G0268048"/>
<dbReference type="VEuPathDB" id="AmoebaDB:DDB_G0268048"/>
<dbReference type="eggNOG" id="KOG3289">
    <property type="taxonomic scope" value="Eukaryota"/>
</dbReference>
<dbReference type="HOGENOM" id="CLU_087337_0_1_1"/>
<dbReference type="InParanoid" id="Q55FM0"/>
<dbReference type="OMA" id="PHCAING"/>
<dbReference type="PhylomeDB" id="Q55FM0"/>
<dbReference type="PRO" id="PR:Q55FM0"/>
<dbReference type="Proteomes" id="UP000002195">
    <property type="component" value="Chromosome 1"/>
</dbReference>
<dbReference type="GO" id="GO:0072546">
    <property type="term" value="C:EMC complex"/>
    <property type="evidence" value="ECO:0000318"/>
    <property type="project" value="GO_Central"/>
</dbReference>
<dbReference type="CDD" id="cd08060">
    <property type="entry name" value="MPN_UPF0172"/>
    <property type="match status" value="1"/>
</dbReference>
<dbReference type="FunFam" id="3.40.140.10:FF:000146">
    <property type="entry name" value="ER membrane protein complex subunit 8/9 homolog"/>
    <property type="match status" value="1"/>
</dbReference>
<dbReference type="Gene3D" id="3.40.140.10">
    <property type="entry name" value="Cytidine Deaminase, domain 2"/>
    <property type="match status" value="1"/>
</dbReference>
<dbReference type="InterPro" id="IPR005366">
    <property type="entry name" value="EMC8/9"/>
</dbReference>
<dbReference type="InterPro" id="IPR037518">
    <property type="entry name" value="MPN"/>
</dbReference>
<dbReference type="PANTHER" id="PTHR12941">
    <property type="entry name" value="ER MEMBRANE PROTEIN COMPLEX"/>
    <property type="match status" value="1"/>
</dbReference>
<dbReference type="PANTHER" id="PTHR12941:SF10">
    <property type="entry name" value="ER MEMBRANE PROTEIN COMPLEX SUBUNIT 8_9 HOMOLOG"/>
    <property type="match status" value="1"/>
</dbReference>
<dbReference type="Pfam" id="PF03665">
    <property type="entry name" value="UPF0172"/>
    <property type="match status" value="1"/>
</dbReference>
<dbReference type="SUPFAM" id="SSF102712">
    <property type="entry name" value="JAB1/MPN domain"/>
    <property type="match status" value="1"/>
</dbReference>
<dbReference type="PROSITE" id="PS50249">
    <property type="entry name" value="MPN"/>
    <property type="match status" value="1"/>
</dbReference>
<protein>
    <recommendedName>
        <fullName>ER membrane protein complex subunit 8/9 homolog</fullName>
    </recommendedName>
</protein>
<gene>
    <name type="ORF">DDB_G0268048</name>
</gene>
<reference key="1">
    <citation type="journal article" date="2005" name="Nature">
        <title>The genome of the social amoeba Dictyostelium discoideum.</title>
        <authorList>
            <person name="Eichinger L."/>
            <person name="Pachebat J.A."/>
            <person name="Gloeckner G."/>
            <person name="Rajandream M.A."/>
            <person name="Sucgang R."/>
            <person name="Berriman M."/>
            <person name="Song J."/>
            <person name="Olsen R."/>
            <person name="Szafranski K."/>
            <person name="Xu Q."/>
            <person name="Tunggal B."/>
            <person name="Kummerfeld S."/>
            <person name="Madera M."/>
            <person name="Konfortov B.A."/>
            <person name="Rivero F."/>
            <person name="Bankier A.T."/>
            <person name="Lehmann R."/>
            <person name="Hamlin N."/>
            <person name="Davies R."/>
            <person name="Gaudet P."/>
            <person name="Fey P."/>
            <person name="Pilcher K."/>
            <person name="Chen G."/>
            <person name="Saunders D."/>
            <person name="Sodergren E.J."/>
            <person name="Davis P."/>
            <person name="Kerhornou A."/>
            <person name="Nie X."/>
            <person name="Hall N."/>
            <person name="Anjard C."/>
            <person name="Hemphill L."/>
            <person name="Bason N."/>
            <person name="Farbrother P."/>
            <person name="Desany B."/>
            <person name="Just E."/>
            <person name="Morio T."/>
            <person name="Rost R."/>
            <person name="Churcher C.M."/>
            <person name="Cooper J."/>
            <person name="Haydock S."/>
            <person name="van Driessche N."/>
            <person name="Cronin A."/>
            <person name="Goodhead I."/>
            <person name="Muzny D.M."/>
            <person name="Mourier T."/>
            <person name="Pain A."/>
            <person name="Lu M."/>
            <person name="Harper D."/>
            <person name="Lindsay R."/>
            <person name="Hauser H."/>
            <person name="James K.D."/>
            <person name="Quiles M."/>
            <person name="Madan Babu M."/>
            <person name="Saito T."/>
            <person name="Buchrieser C."/>
            <person name="Wardroper A."/>
            <person name="Felder M."/>
            <person name="Thangavelu M."/>
            <person name="Johnson D."/>
            <person name="Knights A."/>
            <person name="Loulseged H."/>
            <person name="Mungall K.L."/>
            <person name="Oliver K."/>
            <person name="Price C."/>
            <person name="Quail M.A."/>
            <person name="Urushihara H."/>
            <person name="Hernandez J."/>
            <person name="Rabbinowitsch E."/>
            <person name="Steffen D."/>
            <person name="Sanders M."/>
            <person name="Ma J."/>
            <person name="Kohara Y."/>
            <person name="Sharp S."/>
            <person name="Simmonds M.N."/>
            <person name="Spiegler S."/>
            <person name="Tivey A."/>
            <person name="Sugano S."/>
            <person name="White B."/>
            <person name="Walker D."/>
            <person name="Woodward J.R."/>
            <person name="Winckler T."/>
            <person name="Tanaka Y."/>
            <person name="Shaulsky G."/>
            <person name="Schleicher M."/>
            <person name="Weinstock G.M."/>
            <person name="Rosenthal A."/>
            <person name="Cox E.C."/>
            <person name="Chisholm R.L."/>
            <person name="Gibbs R.A."/>
            <person name="Loomis W.F."/>
            <person name="Platzer M."/>
            <person name="Kay R.R."/>
            <person name="Williams J.G."/>
            <person name="Dear P.H."/>
            <person name="Noegel A.A."/>
            <person name="Barrell B.G."/>
            <person name="Kuspa A."/>
        </authorList>
    </citation>
    <scope>NUCLEOTIDE SEQUENCE [LARGE SCALE GENOMIC DNA]</scope>
    <source>
        <strain>AX4</strain>
    </source>
</reference>
<proteinExistence type="inferred from homology"/>
<comment type="similarity">
    <text evidence="2">Belongs to the EMC8/EMC9 family.</text>
</comment>
<accession>Q55FM0</accession>
<name>EMC89_DICDI</name>